<feature type="chain" id="PRO_1000213351" description="3-isopropylmalate dehydratase small subunit">
    <location>
        <begin position="1"/>
        <end position="197"/>
    </location>
</feature>
<dbReference type="EC" id="4.2.1.33" evidence="1"/>
<dbReference type="EMBL" id="CP001638">
    <property type="protein sequence ID" value="ACS25285.1"/>
    <property type="molecule type" value="Genomic_DNA"/>
</dbReference>
<dbReference type="SMR" id="C5D5L7"/>
<dbReference type="STRING" id="471223.GWCH70_2590"/>
<dbReference type="KEGG" id="gwc:GWCH70_2590"/>
<dbReference type="eggNOG" id="COG0066">
    <property type="taxonomic scope" value="Bacteria"/>
</dbReference>
<dbReference type="HOGENOM" id="CLU_081378_0_3_9"/>
<dbReference type="OrthoDB" id="9777465at2"/>
<dbReference type="UniPathway" id="UPA00048">
    <property type="reaction ID" value="UER00071"/>
</dbReference>
<dbReference type="GO" id="GO:0009316">
    <property type="term" value="C:3-isopropylmalate dehydratase complex"/>
    <property type="evidence" value="ECO:0007669"/>
    <property type="project" value="InterPro"/>
</dbReference>
<dbReference type="GO" id="GO:0003861">
    <property type="term" value="F:3-isopropylmalate dehydratase activity"/>
    <property type="evidence" value="ECO:0007669"/>
    <property type="project" value="UniProtKB-UniRule"/>
</dbReference>
<dbReference type="GO" id="GO:0009098">
    <property type="term" value="P:L-leucine biosynthetic process"/>
    <property type="evidence" value="ECO:0007669"/>
    <property type="project" value="UniProtKB-UniRule"/>
</dbReference>
<dbReference type="CDD" id="cd01577">
    <property type="entry name" value="IPMI_Swivel"/>
    <property type="match status" value="1"/>
</dbReference>
<dbReference type="FunFam" id="3.20.19.10:FF:000003">
    <property type="entry name" value="3-isopropylmalate dehydratase small subunit"/>
    <property type="match status" value="1"/>
</dbReference>
<dbReference type="Gene3D" id="3.20.19.10">
    <property type="entry name" value="Aconitase, domain 4"/>
    <property type="match status" value="1"/>
</dbReference>
<dbReference type="HAMAP" id="MF_01031">
    <property type="entry name" value="LeuD_type1"/>
    <property type="match status" value="1"/>
</dbReference>
<dbReference type="InterPro" id="IPR004431">
    <property type="entry name" value="3-IsopropMal_deHydase_ssu"/>
</dbReference>
<dbReference type="InterPro" id="IPR015928">
    <property type="entry name" value="Aconitase/3IPM_dehydase_swvl"/>
</dbReference>
<dbReference type="InterPro" id="IPR000573">
    <property type="entry name" value="AconitaseA/IPMdHydase_ssu_swvl"/>
</dbReference>
<dbReference type="InterPro" id="IPR033940">
    <property type="entry name" value="IPMI_Swivel"/>
</dbReference>
<dbReference type="InterPro" id="IPR050075">
    <property type="entry name" value="LeuD"/>
</dbReference>
<dbReference type="NCBIfam" id="TIGR00171">
    <property type="entry name" value="leuD"/>
    <property type="match status" value="1"/>
</dbReference>
<dbReference type="NCBIfam" id="NF002458">
    <property type="entry name" value="PRK01641.1"/>
    <property type="match status" value="1"/>
</dbReference>
<dbReference type="PANTHER" id="PTHR43345:SF5">
    <property type="entry name" value="3-ISOPROPYLMALATE DEHYDRATASE SMALL SUBUNIT"/>
    <property type="match status" value="1"/>
</dbReference>
<dbReference type="PANTHER" id="PTHR43345">
    <property type="entry name" value="3-ISOPROPYLMALATE DEHYDRATASE SMALL SUBUNIT 2-RELATED-RELATED"/>
    <property type="match status" value="1"/>
</dbReference>
<dbReference type="Pfam" id="PF00694">
    <property type="entry name" value="Aconitase_C"/>
    <property type="match status" value="1"/>
</dbReference>
<dbReference type="SUPFAM" id="SSF52016">
    <property type="entry name" value="LeuD/IlvD-like"/>
    <property type="match status" value="1"/>
</dbReference>
<sequence>MKPFTVHKGKVAGIDRANIDTDQIIPKQFLKRIERTGFGKFLFYDWRYIDGEKPNPDFELNRPENEGATILVANENFGCGSSREHAPWALQDYGFQAIIAPSFADIFYNNCLKNGLLPIRLAKQDVEYLLRESTKADYELTISLEDQRVYDDSGFERTFDIDPYRKQLLLKGWDEIDLTFVYEPYIAEYEKKHCPMS</sequence>
<organism>
    <name type="scientific">Geobacillus sp. (strain WCH70)</name>
    <dbReference type="NCBI Taxonomy" id="471223"/>
    <lineage>
        <taxon>Bacteria</taxon>
        <taxon>Bacillati</taxon>
        <taxon>Bacillota</taxon>
        <taxon>Bacilli</taxon>
        <taxon>Bacillales</taxon>
        <taxon>Anoxybacillaceae</taxon>
        <taxon>Geobacillus</taxon>
    </lineage>
</organism>
<name>LEUD_GEOSW</name>
<evidence type="ECO:0000255" key="1">
    <source>
        <dbReference type="HAMAP-Rule" id="MF_01031"/>
    </source>
</evidence>
<accession>C5D5L7</accession>
<proteinExistence type="inferred from homology"/>
<keyword id="KW-0028">Amino-acid biosynthesis</keyword>
<keyword id="KW-0100">Branched-chain amino acid biosynthesis</keyword>
<keyword id="KW-0432">Leucine biosynthesis</keyword>
<keyword id="KW-0456">Lyase</keyword>
<gene>
    <name evidence="1" type="primary">leuD</name>
    <name type="ordered locus">GWCH70_2590</name>
</gene>
<protein>
    <recommendedName>
        <fullName evidence="1">3-isopropylmalate dehydratase small subunit</fullName>
        <ecNumber evidence="1">4.2.1.33</ecNumber>
    </recommendedName>
    <alternativeName>
        <fullName evidence="1">Alpha-IPM isomerase</fullName>
        <shortName evidence="1">IPMI</shortName>
    </alternativeName>
    <alternativeName>
        <fullName evidence="1">Isopropylmalate isomerase</fullName>
    </alternativeName>
</protein>
<comment type="function">
    <text evidence="1">Catalyzes the isomerization between 2-isopropylmalate and 3-isopropylmalate, via the formation of 2-isopropylmaleate.</text>
</comment>
<comment type="catalytic activity">
    <reaction evidence="1">
        <text>(2R,3S)-3-isopropylmalate = (2S)-2-isopropylmalate</text>
        <dbReference type="Rhea" id="RHEA:32287"/>
        <dbReference type="ChEBI" id="CHEBI:1178"/>
        <dbReference type="ChEBI" id="CHEBI:35121"/>
        <dbReference type="EC" id="4.2.1.33"/>
    </reaction>
</comment>
<comment type="pathway">
    <text evidence="1">Amino-acid biosynthesis; L-leucine biosynthesis; L-leucine from 3-methyl-2-oxobutanoate: step 2/4.</text>
</comment>
<comment type="subunit">
    <text evidence="1">Heterodimer of LeuC and LeuD.</text>
</comment>
<comment type="similarity">
    <text evidence="1">Belongs to the LeuD family. LeuD type 1 subfamily.</text>
</comment>
<reference key="1">
    <citation type="submission" date="2009-06" db="EMBL/GenBank/DDBJ databases">
        <title>Complete sequence of chromosome of Geopacillus sp. WCH70.</title>
        <authorList>
            <consortium name="US DOE Joint Genome Institute"/>
            <person name="Lucas S."/>
            <person name="Copeland A."/>
            <person name="Lapidus A."/>
            <person name="Glavina del Rio T."/>
            <person name="Dalin E."/>
            <person name="Tice H."/>
            <person name="Bruce D."/>
            <person name="Goodwin L."/>
            <person name="Pitluck S."/>
            <person name="Chertkov O."/>
            <person name="Brettin T."/>
            <person name="Detter J.C."/>
            <person name="Han C."/>
            <person name="Larimer F."/>
            <person name="Land M."/>
            <person name="Hauser L."/>
            <person name="Kyrpides N."/>
            <person name="Mikhailova N."/>
            <person name="Brumm P."/>
            <person name="Mead D.A."/>
            <person name="Richardson P."/>
        </authorList>
    </citation>
    <scope>NUCLEOTIDE SEQUENCE [LARGE SCALE GENOMIC DNA]</scope>
    <source>
        <strain>WCH70</strain>
    </source>
</reference>